<organism>
    <name type="scientific">Arabidopsis thaliana</name>
    <name type="common">Mouse-ear cress</name>
    <dbReference type="NCBI Taxonomy" id="3702"/>
    <lineage>
        <taxon>Eukaryota</taxon>
        <taxon>Viridiplantae</taxon>
        <taxon>Streptophyta</taxon>
        <taxon>Embryophyta</taxon>
        <taxon>Tracheophyta</taxon>
        <taxon>Spermatophyta</taxon>
        <taxon>Magnoliopsida</taxon>
        <taxon>eudicotyledons</taxon>
        <taxon>Gunneridae</taxon>
        <taxon>Pentapetalae</taxon>
        <taxon>rosids</taxon>
        <taxon>malvids</taxon>
        <taxon>Brassicales</taxon>
        <taxon>Brassicaceae</taxon>
        <taxon>Camelineae</taxon>
        <taxon>Arabidopsis</taxon>
    </lineage>
</organism>
<comment type="similarity">
    <text evidence="2">Belongs to the PsbP family.</text>
</comment>
<comment type="caution">
    <text evidence="2">Could be the product of a pseudogene. Created by a base pair loss in a duplication of PSBP1 (At1g06680). Not detected at the protein level in purified chloroplasts.</text>
</comment>
<comment type="sequence caution" evidence="2">
    <conflict type="erroneous gene model prediction">
        <sequence resource="EMBL-CDS" id="AAC02750"/>
    </conflict>
</comment>
<evidence type="ECO:0000250" key="1">
    <source>
        <dbReference type="UniProtKB" id="Q42029"/>
    </source>
</evidence>
<evidence type="ECO:0000305" key="2"/>
<protein>
    <recommendedName>
        <fullName>Putative oxygen-evolving enhancer protein 2-2</fullName>
        <shortName>OEE2</shortName>
    </recommendedName>
</protein>
<name>PSBP2_ARATH</name>
<accession>O49344</accession>
<accession>Q680P6</accession>
<feature type="chain" id="PRO_0000029572" description="Putative oxygen-evolving enhancer protein 2-2">
    <location>
        <begin position="1"/>
        <end position="125"/>
    </location>
</feature>
<feature type="modified residue" description="Phosphoserine" evidence="1">
    <location>
        <position position="15"/>
    </location>
</feature>
<keyword id="KW-0597">Phosphoprotein</keyword>
<keyword id="KW-1185">Reference proteome</keyword>
<sequence length="125" mass="13443">MITPTDKKSITDYGSPEQFLSQVNYLLGKQAYVGETASEGGFDANAVATANILETSTQEIGGKEYYYLSVLTRTADGDEGGKHQLITATVNGGKLYICKAQAGDKRWFKGARKFVENAATSFSVA</sequence>
<gene>
    <name type="primary">PSBP2</name>
    <name type="ordered locus">At2g30790</name>
    <name type="ORF">T11J7.18</name>
</gene>
<reference key="1">
    <citation type="journal article" date="1999" name="Nature">
        <title>Sequence and analysis of chromosome 2 of the plant Arabidopsis thaliana.</title>
        <authorList>
            <person name="Lin X."/>
            <person name="Kaul S."/>
            <person name="Rounsley S.D."/>
            <person name="Shea T.P."/>
            <person name="Benito M.-I."/>
            <person name="Town C.D."/>
            <person name="Fujii C.Y."/>
            <person name="Mason T.M."/>
            <person name="Bowman C.L."/>
            <person name="Barnstead M.E."/>
            <person name="Feldblyum T.V."/>
            <person name="Buell C.R."/>
            <person name="Ketchum K.A."/>
            <person name="Lee J.J."/>
            <person name="Ronning C.M."/>
            <person name="Koo H.L."/>
            <person name="Moffat K.S."/>
            <person name="Cronin L.A."/>
            <person name="Shen M."/>
            <person name="Pai G."/>
            <person name="Van Aken S."/>
            <person name="Umayam L."/>
            <person name="Tallon L.J."/>
            <person name="Gill J.E."/>
            <person name="Adams M.D."/>
            <person name="Carrera A.J."/>
            <person name="Creasy T.H."/>
            <person name="Goodman H.M."/>
            <person name="Somerville C.R."/>
            <person name="Copenhaver G.P."/>
            <person name="Preuss D."/>
            <person name="Nierman W.C."/>
            <person name="White O."/>
            <person name="Eisen J.A."/>
            <person name="Salzberg S.L."/>
            <person name="Fraser C.M."/>
            <person name="Venter J.C."/>
        </authorList>
    </citation>
    <scope>NUCLEOTIDE SEQUENCE [LARGE SCALE GENOMIC DNA]</scope>
    <source>
        <strain>cv. Columbia</strain>
    </source>
</reference>
<reference key="2">
    <citation type="journal article" date="2017" name="Plant J.">
        <title>Araport11: a complete reannotation of the Arabidopsis thaliana reference genome.</title>
        <authorList>
            <person name="Cheng C.Y."/>
            <person name="Krishnakumar V."/>
            <person name="Chan A.P."/>
            <person name="Thibaud-Nissen F."/>
            <person name="Schobel S."/>
            <person name="Town C.D."/>
        </authorList>
    </citation>
    <scope>GENOME REANNOTATION</scope>
    <source>
        <strain>cv. Columbia</strain>
    </source>
</reference>
<reference key="3">
    <citation type="submission" date="2004-09" db="EMBL/GenBank/DDBJ databases">
        <authorList>
            <consortium name="Center for eukaryotic structural genomics (CESG)"/>
        </authorList>
    </citation>
    <scope>NUCLEOTIDE SEQUENCE [LARGE SCALE MRNA]</scope>
</reference>
<reference key="4">
    <citation type="submission" date="2004-09" db="EMBL/GenBank/DDBJ databases">
        <title>Large-scale analysis of RIKEN Arabidopsis full-length (RAFL) cDNAs.</title>
        <authorList>
            <person name="Totoki Y."/>
            <person name="Seki M."/>
            <person name="Ishida J."/>
            <person name="Nakajima M."/>
            <person name="Enju A."/>
            <person name="Kamiya A."/>
            <person name="Narusaka M."/>
            <person name="Shin-i T."/>
            <person name="Nakagawa M."/>
            <person name="Sakamoto N."/>
            <person name="Oishi K."/>
            <person name="Kohara Y."/>
            <person name="Kobayashi M."/>
            <person name="Toyoda A."/>
            <person name="Sakaki Y."/>
            <person name="Sakurai T."/>
            <person name="Iida K."/>
            <person name="Akiyama K."/>
            <person name="Satou M."/>
            <person name="Toyoda T."/>
            <person name="Konagaya A."/>
            <person name="Carninci P."/>
            <person name="Kawai J."/>
            <person name="Hayashizaki Y."/>
            <person name="Shinozaki K."/>
        </authorList>
    </citation>
    <scope>NUCLEOTIDE SEQUENCE [LARGE SCALE MRNA]</scope>
    <source>
        <strain>cv. Columbia</strain>
    </source>
</reference>
<reference key="5">
    <citation type="submission" date="2005-05" db="EMBL/GenBank/DDBJ databases">
        <title>Arabidopsis cDNA clones.</title>
        <authorList>
            <person name="Shinn P."/>
            <person name="Chen H."/>
            <person name="Cheuk R.F."/>
            <person name="Kim C.J."/>
            <person name="Ecker J.R."/>
        </authorList>
    </citation>
    <scope>NUCLEOTIDE SEQUENCE [LARGE SCALE MRNA]</scope>
    <source>
        <strain>cv. Columbia</strain>
    </source>
</reference>
<reference key="6">
    <citation type="journal article" date="2002" name="Plant Cell">
        <title>Central functions of the lumenal and peripheral thylakoid proteome of Arabidopsis determined by experimentation and genome-wide prediction.</title>
        <authorList>
            <person name="Peltier J.-B."/>
            <person name="Emanuelsson O."/>
            <person name="Kalume D.E."/>
            <person name="Ytterberg J."/>
            <person name="Friso G."/>
            <person name="Rudella A."/>
            <person name="Liberles D.A."/>
            <person name="Soederberg L."/>
            <person name="Roepstorff P."/>
            <person name="von Heijne G."/>
            <person name="van Wijk K.J."/>
        </authorList>
    </citation>
    <scope>IDENTIFICATION AS A PSEUDOGENE</scope>
</reference>
<reference key="7">
    <citation type="journal article" date="2007" name="Plant Physiol.">
        <title>Distinct functions for the two PsbP-like proteins PPL1 and PPL2 in the chloroplast thylakoid lumen of Arabidopsis.</title>
        <authorList>
            <person name="Ishihara S."/>
            <person name="Takabayashi A."/>
            <person name="Ido K."/>
            <person name="Endo T."/>
            <person name="Ifuku K."/>
            <person name="Sato F."/>
        </authorList>
    </citation>
    <scope>GENE FAMILY</scope>
    <scope>NOMENCLATURE</scope>
</reference>
<dbReference type="EMBL" id="AC002340">
    <property type="protein sequence ID" value="AAC02750.1"/>
    <property type="status" value="ALT_SEQ"/>
    <property type="molecule type" value="Genomic_DNA"/>
</dbReference>
<dbReference type="EMBL" id="CP002685">
    <property type="protein sequence ID" value="AEC08441.1"/>
    <property type="molecule type" value="Genomic_DNA"/>
</dbReference>
<dbReference type="EMBL" id="BT015608">
    <property type="status" value="NOT_ANNOTATED_CDS"/>
    <property type="molecule type" value="mRNA"/>
</dbReference>
<dbReference type="EMBL" id="BT022094">
    <property type="protein sequence ID" value="AAY34155.1"/>
    <property type="molecule type" value="mRNA"/>
</dbReference>
<dbReference type="EMBL" id="AK175738">
    <property type="protein sequence ID" value="BAD43501.1"/>
    <property type="molecule type" value="mRNA"/>
</dbReference>
<dbReference type="EMBL" id="AK175821">
    <property type="protein sequence ID" value="BAD43584.1"/>
    <property type="molecule type" value="mRNA"/>
</dbReference>
<dbReference type="EMBL" id="AK175934">
    <property type="protein sequence ID" value="BAD43697.1"/>
    <property type="molecule type" value="mRNA"/>
</dbReference>
<dbReference type="PIR" id="G84712">
    <property type="entry name" value="G84712"/>
</dbReference>
<dbReference type="SMR" id="O49344"/>
<dbReference type="BioGRID" id="2979">
    <property type="interactions" value="2"/>
</dbReference>
<dbReference type="FunCoup" id="O49344">
    <property type="interactions" value="13"/>
</dbReference>
<dbReference type="STRING" id="3702.O49344"/>
<dbReference type="TCDB" id="3.E.2.2.3">
    <property type="family name" value="the photosynthetic reaction center (prc) family"/>
</dbReference>
<dbReference type="PaxDb" id="3702-AT2G30790.1"/>
<dbReference type="ProteomicsDB" id="226231"/>
<dbReference type="DNASU" id="817630"/>
<dbReference type="EnsemblPlants" id="AT2G30790.1">
    <property type="protein sequence ID" value="AT2G30790.1"/>
    <property type="gene ID" value="AT2G30790"/>
</dbReference>
<dbReference type="GeneID" id="817630"/>
<dbReference type="Gramene" id="AT2G30790.1">
    <property type="protein sequence ID" value="AT2G30790.1"/>
    <property type="gene ID" value="AT2G30790"/>
</dbReference>
<dbReference type="KEGG" id="ath:AT2G30790"/>
<dbReference type="Araport" id="AT2G30790"/>
<dbReference type="TAIR" id="AT2G30790">
    <property type="gene designation" value="PSBP-2"/>
</dbReference>
<dbReference type="eggNOG" id="ENOG502QUMW">
    <property type="taxonomic scope" value="Eukaryota"/>
</dbReference>
<dbReference type="HOGENOM" id="CLU_2115271_0_0_1"/>
<dbReference type="InParanoid" id="O49344"/>
<dbReference type="OMA" id="FVEGPWN"/>
<dbReference type="PhylomeDB" id="O49344"/>
<dbReference type="Proteomes" id="UP000006548">
    <property type="component" value="Chromosome 2"/>
</dbReference>
<dbReference type="ExpressionAtlas" id="O49344">
    <property type="expression patterns" value="baseline and differential"/>
</dbReference>
<dbReference type="GO" id="GO:0009507">
    <property type="term" value="C:chloroplast"/>
    <property type="evidence" value="ECO:0007005"/>
    <property type="project" value="TAIR"/>
</dbReference>
<dbReference type="GO" id="GO:0009570">
    <property type="term" value="C:chloroplast stroma"/>
    <property type="evidence" value="ECO:0007005"/>
    <property type="project" value="TAIR"/>
</dbReference>
<dbReference type="GO" id="GO:0009534">
    <property type="term" value="C:chloroplast thylakoid"/>
    <property type="evidence" value="ECO:0007005"/>
    <property type="project" value="TAIR"/>
</dbReference>
<dbReference type="GO" id="GO:0009543">
    <property type="term" value="C:chloroplast thylakoid lumen"/>
    <property type="evidence" value="ECO:0007005"/>
    <property type="project" value="TAIR"/>
</dbReference>
<dbReference type="GO" id="GO:0009535">
    <property type="term" value="C:chloroplast thylakoid membrane"/>
    <property type="evidence" value="ECO:0007005"/>
    <property type="project" value="TAIR"/>
</dbReference>
<dbReference type="GO" id="GO:0019898">
    <property type="term" value="C:extrinsic component of membrane"/>
    <property type="evidence" value="ECO:0007669"/>
    <property type="project" value="InterPro"/>
</dbReference>
<dbReference type="GO" id="GO:0005777">
    <property type="term" value="C:peroxisome"/>
    <property type="evidence" value="ECO:0007005"/>
    <property type="project" value="TAIR"/>
</dbReference>
<dbReference type="GO" id="GO:0009654">
    <property type="term" value="C:photosystem II oxygen evolving complex"/>
    <property type="evidence" value="ECO:0007669"/>
    <property type="project" value="InterPro"/>
</dbReference>
<dbReference type="GO" id="GO:0009579">
    <property type="term" value="C:thylakoid"/>
    <property type="evidence" value="ECO:0007005"/>
    <property type="project" value="TAIR"/>
</dbReference>
<dbReference type="GO" id="GO:0031977">
    <property type="term" value="C:thylakoid lumen"/>
    <property type="evidence" value="ECO:0007005"/>
    <property type="project" value="TAIR"/>
</dbReference>
<dbReference type="GO" id="GO:0005509">
    <property type="term" value="F:calcium ion binding"/>
    <property type="evidence" value="ECO:0007669"/>
    <property type="project" value="InterPro"/>
</dbReference>
<dbReference type="GO" id="GO:0015979">
    <property type="term" value="P:photosynthesis"/>
    <property type="evidence" value="ECO:0007669"/>
    <property type="project" value="InterPro"/>
</dbReference>
<dbReference type="Gene3D" id="3.40.1000.10">
    <property type="entry name" value="Mog1/PsbP, alpha/beta/alpha sandwich"/>
    <property type="match status" value="1"/>
</dbReference>
<dbReference type="InterPro" id="IPR016123">
    <property type="entry name" value="Mog1/PsbP_a/b/a-sand"/>
</dbReference>
<dbReference type="InterPro" id="IPR002683">
    <property type="entry name" value="PsbP_C"/>
</dbReference>
<dbReference type="PANTHER" id="PTHR31407">
    <property type="match status" value="1"/>
</dbReference>
<dbReference type="PANTHER" id="PTHR31407:SF39">
    <property type="entry name" value="PSBP C-TERMINAL DOMAIN-CONTAINING PROTEIN"/>
    <property type="match status" value="1"/>
</dbReference>
<dbReference type="Pfam" id="PF01789">
    <property type="entry name" value="PsbP"/>
    <property type="match status" value="1"/>
</dbReference>
<dbReference type="SUPFAM" id="SSF55724">
    <property type="entry name" value="Mog1p/PsbP-like"/>
    <property type="match status" value="1"/>
</dbReference>
<proteinExistence type="uncertain"/>